<proteinExistence type="inferred from homology"/>
<gene>
    <name type="ordered locus">mll4256</name>
</gene>
<dbReference type="EMBL" id="BA000012">
    <property type="protein sequence ID" value="BAB50956.1"/>
    <property type="molecule type" value="Genomic_DNA"/>
</dbReference>
<dbReference type="RefSeq" id="WP_010912298.1">
    <property type="nucleotide sequence ID" value="NC_002678.2"/>
</dbReference>
<dbReference type="SMR" id="Q98EG3"/>
<dbReference type="KEGG" id="mlo:mll4256"/>
<dbReference type="PATRIC" id="fig|266835.9.peg.3359"/>
<dbReference type="eggNOG" id="COG3132">
    <property type="taxonomic scope" value="Bacteria"/>
</dbReference>
<dbReference type="HOGENOM" id="CLU_057831_2_0_5"/>
<dbReference type="Proteomes" id="UP000000552">
    <property type="component" value="Chromosome"/>
</dbReference>
<dbReference type="Gene3D" id="1.10.10.10">
    <property type="entry name" value="Winged helix-like DNA-binding domain superfamily/Winged helix DNA-binding domain"/>
    <property type="match status" value="2"/>
</dbReference>
<dbReference type="HAMAP" id="MF_01584">
    <property type="entry name" value="UPF0502"/>
    <property type="match status" value="1"/>
</dbReference>
<dbReference type="InterPro" id="IPR007432">
    <property type="entry name" value="DUF480"/>
</dbReference>
<dbReference type="InterPro" id="IPR036388">
    <property type="entry name" value="WH-like_DNA-bd_sf"/>
</dbReference>
<dbReference type="InterPro" id="IPR036390">
    <property type="entry name" value="WH_DNA-bd_sf"/>
</dbReference>
<dbReference type="PANTHER" id="PTHR38768">
    <property type="entry name" value="UPF0502 PROTEIN YCEH"/>
    <property type="match status" value="1"/>
</dbReference>
<dbReference type="PANTHER" id="PTHR38768:SF1">
    <property type="entry name" value="UPF0502 PROTEIN YCEH"/>
    <property type="match status" value="1"/>
</dbReference>
<dbReference type="Pfam" id="PF04337">
    <property type="entry name" value="DUF480"/>
    <property type="match status" value="1"/>
</dbReference>
<dbReference type="SUPFAM" id="SSF46785">
    <property type="entry name" value="Winged helix' DNA-binding domain"/>
    <property type="match status" value="2"/>
</dbReference>
<reference key="1">
    <citation type="journal article" date="2000" name="DNA Res.">
        <title>Complete genome structure of the nitrogen-fixing symbiotic bacterium Mesorhizobium loti.</title>
        <authorList>
            <person name="Kaneko T."/>
            <person name="Nakamura Y."/>
            <person name="Sato S."/>
            <person name="Asamizu E."/>
            <person name="Kato T."/>
            <person name="Sasamoto S."/>
            <person name="Watanabe A."/>
            <person name="Idesawa K."/>
            <person name="Ishikawa A."/>
            <person name="Kawashima K."/>
            <person name="Kimura T."/>
            <person name="Kishida Y."/>
            <person name="Kiyokawa C."/>
            <person name="Kohara M."/>
            <person name="Matsumoto M."/>
            <person name="Matsuno A."/>
            <person name="Mochizuki Y."/>
            <person name="Nakayama S."/>
            <person name="Nakazaki N."/>
            <person name="Shimpo S."/>
            <person name="Sugimoto M."/>
            <person name="Takeuchi C."/>
            <person name="Yamada M."/>
            <person name="Tabata S."/>
        </authorList>
    </citation>
    <scope>NUCLEOTIDE SEQUENCE [LARGE SCALE GENOMIC DNA]</scope>
    <source>
        <strain>LMG 29417 / CECT 9101 / MAFF 303099</strain>
    </source>
</reference>
<sequence>MSEDLPILSPIEARVLGCLIEKKELTPDVYPLTLNAALAAANQKTARDPVMALEQTEVHRALKLLEQKGLVRQMFGSRVERYEHQMAQRFSLTTPQTALIGLLLLRGPQTAHELLARAERMARFSSIEDLRGELDMLIGRRPPLVQEIPRGPGQREDRYVHLLAGPVDVAALSAQRSAPAMPHSDLEARLEALEQEVAALRARLDALGG</sequence>
<comment type="similarity">
    <text evidence="1">Belongs to the UPF0502 family.</text>
</comment>
<protein>
    <recommendedName>
        <fullName evidence="1">UPF0502 protein mll4256</fullName>
    </recommendedName>
</protein>
<feature type="chain" id="PRO_0000309415" description="UPF0502 protein mll4256">
    <location>
        <begin position="1"/>
        <end position="209"/>
    </location>
</feature>
<name>Y4256_RHILO</name>
<accession>Q98EG3</accession>
<organism>
    <name type="scientific">Mesorhizobium japonicum (strain LMG 29417 / CECT 9101 / MAFF 303099)</name>
    <name type="common">Mesorhizobium loti (strain MAFF 303099)</name>
    <dbReference type="NCBI Taxonomy" id="266835"/>
    <lineage>
        <taxon>Bacteria</taxon>
        <taxon>Pseudomonadati</taxon>
        <taxon>Pseudomonadota</taxon>
        <taxon>Alphaproteobacteria</taxon>
        <taxon>Hyphomicrobiales</taxon>
        <taxon>Phyllobacteriaceae</taxon>
        <taxon>Mesorhizobium</taxon>
    </lineage>
</organism>
<evidence type="ECO:0000255" key="1">
    <source>
        <dbReference type="HAMAP-Rule" id="MF_01584"/>
    </source>
</evidence>